<protein>
    <recommendedName>
        <fullName evidence="1">Glucokinase</fullName>
        <ecNumber evidence="1">2.7.1.2</ecNumber>
    </recommendedName>
    <alternativeName>
        <fullName evidence="1">Glucose kinase</fullName>
    </alternativeName>
</protein>
<comment type="catalytic activity">
    <reaction evidence="1">
        <text>D-glucose + ATP = D-glucose 6-phosphate + ADP + H(+)</text>
        <dbReference type="Rhea" id="RHEA:17825"/>
        <dbReference type="ChEBI" id="CHEBI:4167"/>
        <dbReference type="ChEBI" id="CHEBI:15378"/>
        <dbReference type="ChEBI" id="CHEBI:30616"/>
        <dbReference type="ChEBI" id="CHEBI:61548"/>
        <dbReference type="ChEBI" id="CHEBI:456216"/>
        <dbReference type="EC" id="2.7.1.2"/>
    </reaction>
</comment>
<comment type="subcellular location">
    <subcellularLocation>
        <location evidence="1">Cytoplasm</location>
    </subcellularLocation>
</comment>
<comment type="similarity">
    <text evidence="1">Belongs to the bacterial glucokinase family.</text>
</comment>
<dbReference type="EC" id="2.7.1.2" evidence="1"/>
<dbReference type="EMBL" id="AM920689">
    <property type="protein sequence ID" value="CAP51394.1"/>
    <property type="molecule type" value="Genomic_DNA"/>
</dbReference>
<dbReference type="SMR" id="B0RSF9"/>
<dbReference type="KEGG" id="xca:xcc-b100_2041"/>
<dbReference type="HOGENOM" id="CLU_042582_1_0_6"/>
<dbReference type="Proteomes" id="UP000001188">
    <property type="component" value="Chromosome"/>
</dbReference>
<dbReference type="GO" id="GO:0005829">
    <property type="term" value="C:cytosol"/>
    <property type="evidence" value="ECO:0007669"/>
    <property type="project" value="TreeGrafter"/>
</dbReference>
<dbReference type="GO" id="GO:0005524">
    <property type="term" value="F:ATP binding"/>
    <property type="evidence" value="ECO:0007669"/>
    <property type="project" value="UniProtKB-UniRule"/>
</dbReference>
<dbReference type="GO" id="GO:0005536">
    <property type="term" value="F:D-glucose binding"/>
    <property type="evidence" value="ECO:0007669"/>
    <property type="project" value="InterPro"/>
</dbReference>
<dbReference type="GO" id="GO:0004340">
    <property type="term" value="F:glucokinase activity"/>
    <property type="evidence" value="ECO:0007669"/>
    <property type="project" value="UniProtKB-UniRule"/>
</dbReference>
<dbReference type="GO" id="GO:0006096">
    <property type="term" value="P:glycolytic process"/>
    <property type="evidence" value="ECO:0007669"/>
    <property type="project" value="UniProtKB-UniRule"/>
</dbReference>
<dbReference type="CDD" id="cd24008">
    <property type="entry name" value="ASKHA_NBD_GLK"/>
    <property type="match status" value="1"/>
</dbReference>
<dbReference type="Gene3D" id="3.30.420.40">
    <property type="match status" value="1"/>
</dbReference>
<dbReference type="Gene3D" id="3.40.367.20">
    <property type="match status" value="1"/>
</dbReference>
<dbReference type="HAMAP" id="MF_00524">
    <property type="entry name" value="Glucokinase"/>
    <property type="match status" value="1"/>
</dbReference>
<dbReference type="InterPro" id="IPR043129">
    <property type="entry name" value="ATPase_NBD"/>
</dbReference>
<dbReference type="InterPro" id="IPR050201">
    <property type="entry name" value="Bacterial_glucokinase"/>
</dbReference>
<dbReference type="InterPro" id="IPR003836">
    <property type="entry name" value="Glucokinase"/>
</dbReference>
<dbReference type="NCBIfam" id="TIGR00749">
    <property type="entry name" value="glk"/>
    <property type="match status" value="1"/>
</dbReference>
<dbReference type="PANTHER" id="PTHR47690">
    <property type="entry name" value="GLUCOKINASE"/>
    <property type="match status" value="1"/>
</dbReference>
<dbReference type="PANTHER" id="PTHR47690:SF1">
    <property type="entry name" value="GLUCOKINASE"/>
    <property type="match status" value="1"/>
</dbReference>
<dbReference type="Pfam" id="PF02685">
    <property type="entry name" value="Glucokinase"/>
    <property type="match status" value="1"/>
</dbReference>
<dbReference type="SUPFAM" id="SSF53067">
    <property type="entry name" value="Actin-like ATPase domain"/>
    <property type="match status" value="1"/>
</dbReference>
<proteinExistence type="inferred from homology"/>
<gene>
    <name evidence="1" type="primary">glk</name>
    <name type="ordered locus">xcc-b100_2041</name>
</gene>
<evidence type="ECO:0000255" key="1">
    <source>
        <dbReference type="HAMAP-Rule" id="MF_00524"/>
    </source>
</evidence>
<accession>B0RSF9</accession>
<sequence length="335" mass="35535">MTAPSKPVLVADIGGTNARFALADIDASVPLLDDTCREFAVVEFGSLGEAARYYLDQIGVQATKGVFAVAGRVDGDEARITNHPWVISRSRTATMLGFSTLHLINDFAAQAMAISLLRPQDVVQVGGASWRPAPIEQPRNYGVIGPGTGLGVGGLIIRNGRCFPLETEGGHVSFPPGTPEEIRVLEILSEQFGRVSNERLICGPGLVNIHRALSEIAGIDPGPLEPKDITARAAAGDPRASRTIDLFCAIFGAIAGDMVLMQGAWDGVFLTGGLVPKVLDSLQHSGFRQRFEHKGRFSAIMSRVPSLAVMHPHAGLLGAAAYAVDAERALPGEQR</sequence>
<reference key="1">
    <citation type="journal article" date="2008" name="J. Biotechnol.">
        <title>The genome of Xanthomonas campestris pv. campestris B100 and its use for the reconstruction of metabolic pathways involved in xanthan biosynthesis.</title>
        <authorList>
            <person name="Vorhoelter F.-J."/>
            <person name="Schneiker S."/>
            <person name="Goesmann A."/>
            <person name="Krause L."/>
            <person name="Bekel T."/>
            <person name="Kaiser O."/>
            <person name="Linke B."/>
            <person name="Patschkowski T."/>
            <person name="Rueckert C."/>
            <person name="Schmid J."/>
            <person name="Sidhu V.K."/>
            <person name="Sieber V."/>
            <person name="Tauch A."/>
            <person name="Watt S.A."/>
            <person name="Weisshaar B."/>
            <person name="Becker A."/>
            <person name="Niehaus K."/>
            <person name="Puehler A."/>
        </authorList>
    </citation>
    <scope>NUCLEOTIDE SEQUENCE [LARGE SCALE GENOMIC DNA]</scope>
    <source>
        <strain>B100</strain>
    </source>
</reference>
<keyword id="KW-0067">ATP-binding</keyword>
<keyword id="KW-0963">Cytoplasm</keyword>
<keyword id="KW-0324">Glycolysis</keyword>
<keyword id="KW-0418">Kinase</keyword>
<keyword id="KW-0547">Nucleotide-binding</keyword>
<keyword id="KW-0808">Transferase</keyword>
<name>GLK_XANCB</name>
<organism>
    <name type="scientific">Xanthomonas campestris pv. campestris (strain B100)</name>
    <dbReference type="NCBI Taxonomy" id="509169"/>
    <lineage>
        <taxon>Bacteria</taxon>
        <taxon>Pseudomonadati</taxon>
        <taxon>Pseudomonadota</taxon>
        <taxon>Gammaproteobacteria</taxon>
        <taxon>Lysobacterales</taxon>
        <taxon>Lysobacteraceae</taxon>
        <taxon>Xanthomonas</taxon>
    </lineage>
</organism>
<feature type="chain" id="PRO_1000127728" description="Glucokinase">
    <location>
        <begin position="1"/>
        <end position="335"/>
    </location>
</feature>
<feature type="binding site" evidence="1">
    <location>
        <begin position="11"/>
        <end position="16"/>
    </location>
    <ligand>
        <name>ATP</name>
        <dbReference type="ChEBI" id="CHEBI:30616"/>
    </ligand>
</feature>